<name>TTCA_PSEPF</name>
<accession>Q3K8D5</accession>
<proteinExistence type="inferred from homology"/>
<feature type="chain" id="PRO_0000348796" description="tRNA-cytidine(32) 2-sulfurtransferase">
    <location>
        <begin position="1"/>
        <end position="274"/>
    </location>
</feature>
<feature type="short sequence motif" description="PP-loop motif" evidence="1">
    <location>
        <begin position="40"/>
        <end position="45"/>
    </location>
</feature>
<feature type="binding site" evidence="1">
    <location>
        <position position="115"/>
    </location>
    <ligand>
        <name>[4Fe-4S] cluster</name>
        <dbReference type="ChEBI" id="CHEBI:49883"/>
    </ligand>
</feature>
<feature type="binding site" evidence="1">
    <location>
        <position position="118"/>
    </location>
    <ligand>
        <name>[4Fe-4S] cluster</name>
        <dbReference type="ChEBI" id="CHEBI:49883"/>
    </ligand>
</feature>
<feature type="binding site" evidence="1">
    <location>
        <position position="206"/>
    </location>
    <ligand>
        <name>[4Fe-4S] cluster</name>
        <dbReference type="ChEBI" id="CHEBI:49883"/>
    </ligand>
</feature>
<reference key="1">
    <citation type="journal article" date="2009" name="Genome Biol.">
        <title>Genomic and genetic analyses of diversity and plant interactions of Pseudomonas fluorescens.</title>
        <authorList>
            <person name="Silby M.W."/>
            <person name="Cerdeno-Tarraga A.M."/>
            <person name="Vernikos G.S."/>
            <person name="Giddens S.R."/>
            <person name="Jackson R.W."/>
            <person name="Preston G.M."/>
            <person name="Zhang X.-X."/>
            <person name="Moon C.D."/>
            <person name="Gehrig S.M."/>
            <person name="Godfrey S.A.C."/>
            <person name="Knight C.G."/>
            <person name="Malone J.G."/>
            <person name="Robinson Z."/>
            <person name="Spiers A.J."/>
            <person name="Harris S."/>
            <person name="Challis G.L."/>
            <person name="Yaxley A.M."/>
            <person name="Harris D."/>
            <person name="Seeger K."/>
            <person name="Murphy L."/>
            <person name="Rutter S."/>
            <person name="Squares R."/>
            <person name="Quail M.A."/>
            <person name="Saunders E."/>
            <person name="Mavromatis K."/>
            <person name="Brettin T.S."/>
            <person name="Bentley S.D."/>
            <person name="Hothersall J."/>
            <person name="Stephens E."/>
            <person name="Thomas C.M."/>
            <person name="Parkhill J."/>
            <person name="Levy S.B."/>
            <person name="Rainey P.B."/>
            <person name="Thomson N.R."/>
        </authorList>
    </citation>
    <scope>NUCLEOTIDE SEQUENCE [LARGE SCALE GENOMIC DNA]</scope>
    <source>
        <strain>Pf0-1</strain>
    </source>
</reference>
<comment type="function">
    <text evidence="1">Catalyzes the ATP-dependent 2-thiolation of cytidine in position 32 of tRNA, to form 2-thiocytidine (s(2)C32). The sulfur atoms are provided by the cysteine/cysteine desulfurase (IscS) system.</text>
</comment>
<comment type="catalytic activity">
    <reaction evidence="1">
        <text>cytidine(32) in tRNA + S-sulfanyl-L-cysteinyl-[cysteine desulfurase] + AH2 + ATP = 2-thiocytidine(32) in tRNA + L-cysteinyl-[cysteine desulfurase] + A + AMP + diphosphate + H(+)</text>
        <dbReference type="Rhea" id="RHEA:57048"/>
        <dbReference type="Rhea" id="RHEA-COMP:10288"/>
        <dbReference type="Rhea" id="RHEA-COMP:12157"/>
        <dbReference type="Rhea" id="RHEA-COMP:12158"/>
        <dbReference type="Rhea" id="RHEA-COMP:14821"/>
        <dbReference type="ChEBI" id="CHEBI:13193"/>
        <dbReference type="ChEBI" id="CHEBI:15378"/>
        <dbReference type="ChEBI" id="CHEBI:17499"/>
        <dbReference type="ChEBI" id="CHEBI:29950"/>
        <dbReference type="ChEBI" id="CHEBI:30616"/>
        <dbReference type="ChEBI" id="CHEBI:33019"/>
        <dbReference type="ChEBI" id="CHEBI:61963"/>
        <dbReference type="ChEBI" id="CHEBI:82748"/>
        <dbReference type="ChEBI" id="CHEBI:141453"/>
        <dbReference type="ChEBI" id="CHEBI:456215"/>
    </reaction>
    <physiologicalReaction direction="left-to-right" evidence="1">
        <dbReference type="Rhea" id="RHEA:57049"/>
    </physiologicalReaction>
</comment>
<comment type="cofactor">
    <cofactor evidence="1">
        <name>Mg(2+)</name>
        <dbReference type="ChEBI" id="CHEBI:18420"/>
    </cofactor>
</comment>
<comment type="cofactor">
    <cofactor evidence="1">
        <name>[4Fe-4S] cluster</name>
        <dbReference type="ChEBI" id="CHEBI:49883"/>
    </cofactor>
    <text evidence="1">Binds 1 [4Fe-4S] cluster per subunit. The cluster is chelated by three Cys residues, the fourth Fe has a free coordination site that may bind a sulfur atom transferred from the persulfide of IscS.</text>
</comment>
<comment type="pathway">
    <text evidence="1">tRNA modification.</text>
</comment>
<comment type="subunit">
    <text evidence="1">Homodimer.</text>
</comment>
<comment type="subcellular location">
    <subcellularLocation>
        <location evidence="1">Cytoplasm</location>
    </subcellularLocation>
</comment>
<comment type="miscellaneous">
    <text evidence="1">The thiolation reaction likely consists of two steps: a first activation step by ATP to form an adenylated intermediate of the target base of tRNA, and a second nucleophilic substitution step of the sulfur (S) atom supplied by the hydrosulfide attached to the Fe-S cluster.</text>
</comment>
<comment type="similarity">
    <text evidence="1">Belongs to the TtcA family.</text>
</comment>
<gene>
    <name evidence="1" type="primary">ttcA</name>
    <name type="ordered locus">Pfl01_4232</name>
</gene>
<organism>
    <name type="scientific">Pseudomonas fluorescens (strain Pf0-1)</name>
    <dbReference type="NCBI Taxonomy" id="205922"/>
    <lineage>
        <taxon>Bacteria</taxon>
        <taxon>Pseudomonadati</taxon>
        <taxon>Pseudomonadota</taxon>
        <taxon>Gammaproteobacteria</taxon>
        <taxon>Pseudomonadales</taxon>
        <taxon>Pseudomonadaceae</taxon>
        <taxon>Pseudomonas</taxon>
    </lineage>
</organism>
<keyword id="KW-0004">4Fe-4S</keyword>
<keyword id="KW-0067">ATP-binding</keyword>
<keyword id="KW-0963">Cytoplasm</keyword>
<keyword id="KW-0408">Iron</keyword>
<keyword id="KW-0411">Iron-sulfur</keyword>
<keyword id="KW-0460">Magnesium</keyword>
<keyword id="KW-0479">Metal-binding</keyword>
<keyword id="KW-0547">Nucleotide-binding</keyword>
<keyword id="KW-0694">RNA-binding</keyword>
<keyword id="KW-0808">Transferase</keyword>
<keyword id="KW-0819">tRNA processing</keyword>
<keyword id="KW-0820">tRNA-binding</keyword>
<protein>
    <recommendedName>
        <fullName evidence="1">tRNA-cytidine(32) 2-sulfurtransferase</fullName>
        <ecNumber evidence="1">2.8.1.-</ecNumber>
    </recommendedName>
    <alternativeName>
        <fullName evidence="1">Two-thiocytidine biosynthesis protein A</fullName>
    </alternativeName>
    <alternativeName>
        <fullName evidence="1">tRNA 2-thiocytidine biosynthesis protein TtcA</fullName>
    </alternativeName>
</protein>
<sequence>MGTLTVNQNKLQKRLRRLAGEAVTDFNMIEDGDKVMVCLSGGKDSYTMLDVLMHLQKVAPIKFEIVAVNMDQKQPGFPEHVLPAYLKELGIEYHIVEKDTYSVVKELIPEGKTTCSLCSRLRRGTLYTFADEIGATKMALGHHRDDIVETFFLNMFFNGSLKAMPPKLRADDGRNVVIRPLAYCNEKDIQAYSDFKQFPIIPCNLCGSQENLQRQVVKEMLQDWERKTPGRTESIFRSLQNVIPSQLADRNLFDFTSLKIDETAASRFVNVVNL</sequence>
<evidence type="ECO:0000255" key="1">
    <source>
        <dbReference type="HAMAP-Rule" id="MF_01850"/>
    </source>
</evidence>
<dbReference type="EC" id="2.8.1.-" evidence="1"/>
<dbReference type="EMBL" id="CP000094">
    <property type="protein sequence ID" value="ABA75969.1"/>
    <property type="molecule type" value="Genomic_DNA"/>
</dbReference>
<dbReference type="RefSeq" id="WP_011335493.1">
    <property type="nucleotide sequence ID" value="NC_007492.2"/>
</dbReference>
<dbReference type="SMR" id="Q3K8D5"/>
<dbReference type="KEGG" id="pfo:Pfl01_4232"/>
<dbReference type="eggNOG" id="COG0037">
    <property type="taxonomic scope" value="Bacteria"/>
</dbReference>
<dbReference type="HOGENOM" id="CLU_026481_0_0_6"/>
<dbReference type="Proteomes" id="UP000002704">
    <property type="component" value="Chromosome"/>
</dbReference>
<dbReference type="GO" id="GO:0005737">
    <property type="term" value="C:cytoplasm"/>
    <property type="evidence" value="ECO:0007669"/>
    <property type="project" value="UniProtKB-SubCell"/>
</dbReference>
<dbReference type="GO" id="GO:0051539">
    <property type="term" value="F:4 iron, 4 sulfur cluster binding"/>
    <property type="evidence" value="ECO:0007669"/>
    <property type="project" value="UniProtKB-UniRule"/>
</dbReference>
<dbReference type="GO" id="GO:0005524">
    <property type="term" value="F:ATP binding"/>
    <property type="evidence" value="ECO:0007669"/>
    <property type="project" value="UniProtKB-UniRule"/>
</dbReference>
<dbReference type="GO" id="GO:0000287">
    <property type="term" value="F:magnesium ion binding"/>
    <property type="evidence" value="ECO:0007669"/>
    <property type="project" value="UniProtKB-UniRule"/>
</dbReference>
<dbReference type="GO" id="GO:0016783">
    <property type="term" value="F:sulfurtransferase activity"/>
    <property type="evidence" value="ECO:0007669"/>
    <property type="project" value="UniProtKB-UniRule"/>
</dbReference>
<dbReference type="GO" id="GO:0000049">
    <property type="term" value="F:tRNA binding"/>
    <property type="evidence" value="ECO:0007669"/>
    <property type="project" value="UniProtKB-KW"/>
</dbReference>
<dbReference type="GO" id="GO:0034227">
    <property type="term" value="P:tRNA thio-modification"/>
    <property type="evidence" value="ECO:0007669"/>
    <property type="project" value="UniProtKB-UniRule"/>
</dbReference>
<dbReference type="CDD" id="cd24138">
    <property type="entry name" value="TtcA-like"/>
    <property type="match status" value="1"/>
</dbReference>
<dbReference type="Gene3D" id="3.40.50.620">
    <property type="entry name" value="HUPs"/>
    <property type="match status" value="1"/>
</dbReference>
<dbReference type="HAMAP" id="MF_01850">
    <property type="entry name" value="TtcA"/>
    <property type="match status" value="1"/>
</dbReference>
<dbReference type="InterPro" id="IPR014729">
    <property type="entry name" value="Rossmann-like_a/b/a_fold"/>
</dbReference>
<dbReference type="InterPro" id="IPR011063">
    <property type="entry name" value="TilS/TtcA_N"/>
</dbReference>
<dbReference type="InterPro" id="IPR012089">
    <property type="entry name" value="tRNA_Cyd_32_2_STrfase"/>
</dbReference>
<dbReference type="InterPro" id="IPR035107">
    <property type="entry name" value="tRNA_thiolation_TtcA_Ctu1"/>
</dbReference>
<dbReference type="NCBIfam" id="NF007972">
    <property type="entry name" value="PRK10696.1"/>
    <property type="match status" value="1"/>
</dbReference>
<dbReference type="PANTHER" id="PTHR43686:SF1">
    <property type="entry name" value="AMINOTRAN_5 DOMAIN-CONTAINING PROTEIN"/>
    <property type="match status" value="1"/>
</dbReference>
<dbReference type="PANTHER" id="PTHR43686">
    <property type="entry name" value="SULFURTRANSFERASE-RELATED"/>
    <property type="match status" value="1"/>
</dbReference>
<dbReference type="Pfam" id="PF01171">
    <property type="entry name" value="ATP_bind_3"/>
    <property type="match status" value="1"/>
</dbReference>
<dbReference type="PIRSF" id="PIRSF004976">
    <property type="entry name" value="ATPase_YdaO"/>
    <property type="match status" value="1"/>
</dbReference>
<dbReference type="SUPFAM" id="SSF52402">
    <property type="entry name" value="Adenine nucleotide alpha hydrolases-like"/>
    <property type="match status" value="1"/>
</dbReference>